<gene>
    <name evidence="4" type="primary">CYP</name>
    <name evidence="4" type="synonym">ROT1</name>
</gene>
<evidence type="ECO:0000250" key="1">
    <source>
        <dbReference type="UniProtKB" id="P14832"/>
    </source>
</evidence>
<evidence type="ECO:0000255" key="2">
    <source>
        <dbReference type="PROSITE-ProRule" id="PRU00156"/>
    </source>
</evidence>
<evidence type="ECO:0000269" key="3">
    <source>
    </source>
</evidence>
<evidence type="ECO:0000303" key="4">
    <source>
    </source>
</evidence>
<evidence type="ECO:0000305" key="5"/>
<proteinExistence type="evidence at protein level"/>
<organism>
    <name type="scientific">Solanum lycopersicum</name>
    <name type="common">Tomato</name>
    <name type="synonym">Lycopersicon esculentum</name>
    <dbReference type="NCBI Taxonomy" id="4081"/>
    <lineage>
        <taxon>Eukaryota</taxon>
        <taxon>Viridiplantae</taxon>
        <taxon>Streptophyta</taxon>
        <taxon>Embryophyta</taxon>
        <taxon>Tracheophyta</taxon>
        <taxon>Spermatophyta</taxon>
        <taxon>Magnoliopsida</taxon>
        <taxon>eudicotyledons</taxon>
        <taxon>Gunneridae</taxon>
        <taxon>Pentapetalae</taxon>
        <taxon>asterids</taxon>
        <taxon>lamiids</taxon>
        <taxon>Solanales</taxon>
        <taxon>Solanaceae</taxon>
        <taxon>Solanoideae</taxon>
        <taxon>Solaneae</taxon>
        <taxon>Solanum</taxon>
        <taxon>Solanum subgen. Lycopersicon</taxon>
    </lineage>
</organism>
<comment type="function">
    <text evidence="3">PPIases accelerate the folding of proteins (PubMed:1702215). It catalyzes the cis-trans isomerization of proline imidic peptide bonds in oligopeptides (PubMed:1702215).</text>
</comment>
<comment type="catalytic activity">
    <reaction evidence="3">
        <text>[protein]-peptidylproline (omega=180) = [protein]-peptidylproline (omega=0)</text>
        <dbReference type="Rhea" id="RHEA:16237"/>
        <dbReference type="Rhea" id="RHEA-COMP:10747"/>
        <dbReference type="Rhea" id="RHEA-COMP:10748"/>
        <dbReference type="ChEBI" id="CHEBI:83833"/>
        <dbReference type="ChEBI" id="CHEBI:83834"/>
        <dbReference type="EC" id="5.2.1.8"/>
    </reaction>
</comment>
<comment type="activity regulation">
    <text evidence="3">Binds cyclosporin A (CsA) (PubMed:1702215). CsA mediates some of its effects via an inhibitory action on PPIase (PubMed:1702215).</text>
</comment>
<comment type="subcellular location">
    <subcellularLocation>
        <location evidence="1">Cytoplasm</location>
    </subcellularLocation>
</comment>
<comment type="tissue specificity">
    <text evidence="3">Expressed in leaves, floral buds, growing shoots and stamens at anthesis.</text>
</comment>
<comment type="similarity">
    <text evidence="5">Belongs to the cyclophilin-type PPIase family.</text>
</comment>
<keyword id="KW-0963">Cytoplasm</keyword>
<keyword id="KW-0413">Isomerase</keyword>
<keyword id="KW-1185">Reference proteome</keyword>
<keyword id="KW-0697">Rotamase</keyword>
<protein>
    <recommendedName>
        <fullName evidence="4">Peptidyl-prolyl cis-trans isomerase</fullName>
        <shortName evidence="4">PPIase</shortName>
        <ecNumber evidence="3">5.2.1.8</ecNumber>
    </recommendedName>
    <alternativeName>
        <fullName evidence="4">Cyclophilin</fullName>
    </alternativeName>
    <alternativeName>
        <fullName evidence="4">Cyclosporin A-binding protein</fullName>
    </alternativeName>
    <alternativeName>
        <fullName evidence="4">Rotamase</fullName>
    </alternativeName>
</protein>
<reference key="1">
    <citation type="journal article" date="1990" name="Proc. Natl. Acad. Sci. U.S.A.">
        <title>Structure and expression of cytosolic cyclophilin/peptidyl-prolyl cis-trans isomerase of higher plants and production of active tomato cyclophilin in Escherichia coli.</title>
        <authorList>
            <person name="Gasser C.S."/>
            <person name="Gunning D.A."/>
            <person name="Budelier K.A."/>
            <person name="Brown S.M."/>
        </authorList>
    </citation>
    <scope>NUCLEOTIDE SEQUENCE [MRNA]</scope>
    <scope>TISSUE SPECIFICITY</scope>
    <scope>FUNCTION</scope>
    <scope>CATALYTIC ACTIVITY</scope>
    <scope>ACTIVITY REGULATION</scope>
    <source>
        <strain>cv. Mo17</strain>
    </source>
</reference>
<name>CYPH_SOLLC</name>
<dbReference type="EC" id="5.2.1.8" evidence="3"/>
<dbReference type="EMBL" id="M55019">
    <property type="protein sequence ID" value="AAA63543.1"/>
    <property type="molecule type" value="mRNA"/>
</dbReference>
<dbReference type="PIR" id="A39252">
    <property type="entry name" value="CSTO"/>
</dbReference>
<dbReference type="RefSeq" id="NP_001234488.1">
    <property type="nucleotide sequence ID" value="NM_001247559.1"/>
</dbReference>
<dbReference type="SMR" id="P21568"/>
<dbReference type="FunCoup" id="P21568">
    <property type="interactions" value="1798"/>
</dbReference>
<dbReference type="STRING" id="4081.P21568"/>
<dbReference type="Allergome" id="11323">
    <property type="allergen name" value="Sola l 5"/>
</dbReference>
<dbReference type="Allergome" id="11404">
    <property type="allergen name" value="Sola l 5.0101"/>
</dbReference>
<dbReference type="PaxDb" id="4081-Solyc01g111170.2.1"/>
<dbReference type="EnsemblPlants" id="Solyc01g111170.3.1">
    <property type="protein sequence ID" value="Solyc01g111170.3.1.1"/>
    <property type="gene ID" value="Solyc01g111170.3"/>
</dbReference>
<dbReference type="GeneID" id="100736432"/>
<dbReference type="Gramene" id="Solyc01g111170.3.1">
    <property type="protein sequence ID" value="Solyc01g111170.3.1.1"/>
    <property type="gene ID" value="Solyc01g111170.3"/>
</dbReference>
<dbReference type="KEGG" id="sly:100736432"/>
<dbReference type="eggNOG" id="KOG0865">
    <property type="taxonomic scope" value="Eukaryota"/>
</dbReference>
<dbReference type="HOGENOM" id="CLU_012062_4_2_1"/>
<dbReference type="InParanoid" id="P21568"/>
<dbReference type="OMA" id="TWLTGKH"/>
<dbReference type="OrthoDB" id="193499at2759"/>
<dbReference type="PhylomeDB" id="P21568"/>
<dbReference type="Proteomes" id="UP000004994">
    <property type="component" value="Chromosome 1"/>
</dbReference>
<dbReference type="GO" id="GO:0005737">
    <property type="term" value="C:cytoplasm"/>
    <property type="evidence" value="ECO:0000318"/>
    <property type="project" value="GO_Central"/>
</dbReference>
<dbReference type="GO" id="GO:0016018">
    <property type="term" value="F:cyclosporin A binding"/>
    <property type="evidence" value="ECO:0000314"/>
    <property type="project" value="AgBase"/>
</dbReference>
<dbReference type="GO" id="GO:0003755">
    <property type="term" value="F:peptidyl-prolyl cis-trans isomerase activity"/>
    <property type="evidence" value="ECO:0000314"/>
    <property type="project" value="AgBase"/>
</dbReference>
<dbReference type="GO" id="GO:0006457">
    <property type="term" value="P:protein folding"/>
    <property type="evidence" value="ECO:0000318"/>
    <property type="project" value="GO_Central"/>
</dbReference>
<dbReference type="CDD" id="cd01926">
    <property type="entry name" value="cyclophilin_ABH_like"/>
    <property type="match status" value="1"/>
</dbReference>
<dbReference type="FunFam" id="2.40.100.10:FF:000002">
    <property type="entry name" value="Peptidyl-prolyl cis-trans isomerase"/>
    <property type="match status" value="1"/>
</dbReference>
<dbReference type="Gene3D" id="2.40.100.10">
    <property type="entry name" value="Cyclophilin-like"/>
    <property type="match status" value="1"/>
</dbReference>
<dbReference type="InterPro" id="IPR029000">
    <property type="entry name" value="Cyclophilin-like_dom_sf"/>
</dbReference>
<dbReference type="InterPro" id="IPR024936">
    <property type="entry name" value="Cyclophilin-type_PPIase"/>
</dbReference>
<dbReference type="InterPro" id="IPR020892">
    <property type="entry name" value="Cyclophilin-type_PPIase_CS"/>
</dbReference>
<dbReference type="InterPro" id="IPR002130">
    <property type="entry name" value="Cyclophilin-type_PPIase_dom"/>
</dbReference>
<dbReference type="PANTHER" id="PTHR11071">
    <property type="entry name" value="PEPTIDYL-PROLYL CIS-TRANS ISOMERASE"/>
    <property type="match status" value="1"/>
</dbReference>
<dbReference type="PANTHER" id="PTHR11071:SF557">
    <property type="entry name" value="PEPTIDYL-PROLYL CIS-TRANS ISOMERASE"/>
    <property type="match status" value="1"/>
</dbReference>
<dbReference type="Pfam" id="PF00160">
    <property type="entry name" value="Pro_isomerase"/>
    <property type="match status" value="1"/>
</dbReference>
<dbReference type="PIRSF" id="PIRSF001467">
    <property type="entry name" value="Peptidylpro_ismrse"/>
    <property type="match status" value="1"/>
</dbReference>
<dbReference type="PRINTS" id="PR00153">
    <property type="entry name" value="CSAPPISMRASE"/>
</dbReference>
<dbReference type="SUPFAM" id="SSF50891">
    <property type="entry name" value="Cyclophilin-like"/>
    <property type="match status" value="1"/>
</dbReference>
<dbReference type="PROSITE" id="PS00170">
    <property type="entry name" value="CSA_PPIASE_1"/>
    <property type="match status" value="1"/>
</dbReference>
<dbReference type="PROSITE" id="PS50072">
    <property type="entry name" value="CSA_PPIASE_2"/>
    <property type="match status" value="1"/>
</dbReference>
<sequence length="171" mass="17911">MANPKVFFDLTIGGAPAGRVVMELFADTTPKTAENFRALCTGEKGVGKMGKPLHYKGSTFHRVIPGFMCQGGDFTAGNGTGGESIYGAKFNDENFVKKHTGPGILSMANAGPGTNGSQFFICTAKTEWLNGKHVVFGQVVEGMDVIKKAEAVGSSSGRCSKPVVIADCGQL</sequence>
<feature type="chain" id="PRO_0000064145" description="Peptidyl-prolyl cis-trans isomerase">
    <location>
        <begin position="1"/>
        <end position="171"/>
    </location>
</feature>
<feature type="domain" description="PPIase cyclophilin-type" evidence="2">
    <location>
        <begin position="7"/>
        <end position="170"/>
    </location>
</feature>
<accession>P21568</accession>